<name>FOSB2_BACAC</name>
<gene>
    <name evidence="1" type="primary">fosB2</name>
    <name type="ordered locus">BAMEG_0521</name>
</gene>
<keyword id="KW-0046">Antibiotic resistance</keyword>
<keyword id="KW-0963">Cytoplasm</keyword>
<keyword id="KW-0460">Magnesium</keyword>
<keyword id="KW-0479">Metal-binding</keyword>
<keyword id="KW-0808">Transferase</keyword>
<protein>
    <recommendedName>
        <fullName evidence="1">Metallothiol transferase FosB 2</fullName>
        <ecNumber evidence="1">2.5.1.-</ecNumber>
    </recommendedName>
    <alternativeName>
        <fullName evidence="1">Fosfomycin resistance protein 2</fullName>
    </alternativeName>
</protein>
<evidence type="ECO:0000255" key="1">
    <source>
        <dbReference type="HAMAP-Rule" id="MF_01512"/>
    </source>
</evidence>
<evidence type="ECO:0000255" key="2">
    <source>
        <dbReference type="PROSITE-ProRule" id="PRU01163"/>
    </source>
</evidence>
<proteinExistence type="inferred from homology"/>
<accession>C3L6A4</accession>
<feature type="chain" id="PRO_0000383363" description="Metallothiol transferase FosB 2">
    <location>
        <begin position="1"/>
        <end position="139"/>
    </location>
</feature>
<feature type="domain" description="VOC" evidence="2">
    <location>
        <begin position="4"/>
        <end position="119"/>
    </location>
</feature>
<feature type="active site" description="Proton donor/acceptor" evidence="2">
    <location>
        <position position="115"/>
    </location>
</feature>
<feature type="binding site" evidence="1">
    <location>
        <position position="7"/>
    </location>
    <ligand>
        <name>Mg(2+)</name>
        <dbReference type="ChEBI" id="CHEBI:18420"/>
    </ligand>
</feature>
<feature type="binding site" evidence="1">
    <location>
        <position position="66"/>
    </location>
    <ligand>
        <name>Mg(2+)</name>
        <dbReference type="ChEBI" id="CHEBI:18420"/>
    </ligand>
</feature>
<feature type="binding site" evidence="1">
    <location>
        <position position="115"/>
    </location>
    <ligand>
        <name>Mg(2+)</name>
        <dbReference type="ChEBI" id="CHEBI:18420"/>
    </ligand>
</feature>
<sequence>MLQGINHICFSVSNLEKSIEFYQKILQAKLLVKGRKLAYFDLNGLWIALNVEEDIPRNEIKQSYTHMAFTVTNEALDHLKEVLIQNDVNILPGRERDERDQRSLYFTDPDGHKFEFHTGTLQNRLEYYKEDKKHMTFYI</sequence>
<comment type="function">
    <text evidence="1">Metallothiol transferase which confers resistance to fosfomycin by catalyzing the addition of a thiol cofactor to fosfomycin. L-cysteine is probably the physiological thiol donor.</text>
</comment>
<comment type="cofactor">
    <cofactor evidence="1">
        <name>Mg(2+)</name>
        <dbReference type="ChEBI" id="CHEBI:18420"/>
    </cofactor>
</comment>
<comment type="subunit">
    <text evidence="1">Homodimer.</text>
</comment>
<comment type="subcellular location">
    <subcellularLocation>
        <location evidence="1">Cytoplasm</location>
    </subcellularLocation>
</comment>
<comment type="similarity">
    <text evidence="1">Belongs to the fosfomycin resistance protein family. FosB subfamily.</text>
</comment>
<dbReference type="EC" id="2.5.1.-" evidence="1"/>
<dbReference type="EMBL" id="CP001215">
    <property type="protein sequence ID" value="ACP14356.1"/>
    <property type="molecule type" value="Genomic_DNA"/>
</dbReference>
<dbReference type="SMR" id="C3L6A4"/>
<dbReference type="KEGG" id="bah:BAMEG_0521"/>
<dbReference type="HOGENOM" id="CLU_121356_0_0_9"/>
<dbReference type="GO" id="GO:0005737">
    <property type="term" value="C:cytoplasm"/>
    <property type="evidence" value="ECO:0007669"/>
    <property type="project" value="UniProtKB-SubCell"/>
</dbReference>
<dbReference type="GO" id="GO:0000287">
    <property type="term" value="F:magnesium ion binding"/>
    <property type="evidence" value="ECO:0007669"/>
    <property type="project" value="UniProtKB-UniRule"/>
</dbReference>
<dbReference type="GO" id="GO:0016765">
    <property type="term" value="F:transferase activity, transferring alkyl or aryl (other than methyl) groups"/>
    <property type="evidence" value="ECO:0007669"/>
    <property type="project" value="UniProtKB-UniRule"/>
</dbReference>
<dbReference type="GO" id="GO:0046677">
    <property type="term" value="P:response to antibiotic"/>
    <property type="evidence" value="ECO:0007669"/>
    <property type="project" value="UniProtKB-UniRule"/>
</dbReference>
<dbReference type="CDD" id="cd08363">
    <property type="entry name" value="FosB"/>
    <property type="match status" value="1"/>
</dbReference>
<dbReference type="FunFam" id="3.10.180.10:FF:000015">
    <property type="entry name" value="Metallothiol transferase FosB"/>
    <property type="match status" value="1"/>
</dbReference>
<dbReference type="Gene3D" id="3.10.180.10">
    <property type="entry name" value="2,3-Dihydroxybiphenyl 1,2-Dioxygenase, domain 1"/>
    <property type="match status" value="1"/>
</dbReference>
<dbReference type="HAMAP" id="MF_01512">
    <property type="entry name" value="FosB"/>
    <property type="match status" value="1"/>
</dbReference>
<dbReference type="InterPro" id="IPR051332">
    <property type="entry name" value="Fosfomycin_Res_Enzymes"/>
</dbReference>
<dbReference type="InterPro" id="IPR029068">
    <property type="entry name" value="Glyas_Bleomycin-R_OHBP_Dase"/>
</dbReference>
<dbReference type="InterPro" id="IPR004360">
    <property type="entry name" value="Glyas_Fos-R_dOase_dom"/>
</dbReference>
<dbReference type="InterPro" id="IPR022858">
    <property type="entry name" value="Metallothiol_Trafse_FosB"/>
</dbReference>
<dbReference type="InterPro" id="IPR037523">
    <property type="entry name" value="VOC"/>
</dbReference>
<dbReference type="NCBIfam" id="NF000493">
    <property type="entry name" value="Fos_BSH"/>
    <property type="match status" value="1"/>
</dbReference>
<dbReference type="NCBIfam" id="NF003152">
    <property type="entry name" value="PRK04101.1"/>
    <property type="match status" value="1"/>
</dbReference>
<dbReference type="PANTHER" id="PTHR36113:SF6">
    <property type="entry name" value="FOSFOMYCIN RESISTANCE PROTEIN FOSX"/>
    <property type="match status" value="1"/>
</dbReference>
<dbReference type="PANTHER" id="PTHR36113">
    <property type="entry name" value="LYASE, PUTATIVE-RELATED-RELATED"/>
    <property type="match status" value="1"/>
</dbReference>
<dbReference type="Pfam" id="PF00903">
    <property type="entry name" value="Glyoxalase"/>
    <property type="match status" value="1"/>
</dbReference>
<dbReference type="SUPFAM" id="SSF54593">
    <property type="entry name" value="Glyoxalase/Bleomycin resistance protein/Dihydroxybiphenyl dioxygenase"/>
    <property type="match status" value="1"/>
</dbReference>
<dbReference type="PROSITE" id="PS51819">
    <property type="entry name" value="VOC"/>
    <property type="match status" value="1"/>
</dbReference>
<organism>
    <name type="scientific">Bacillus anthracis (strain CDC 684 / NRRL 3495)</name>
    <dbReference type="NCBI Taxonomy" id="568206"/>
    <lineage>
        <taxon>Bacteria</taxon>
        <taxon>Bacillati</taxon>
        <taxon>Bacillota</taxon>
        <taxon>Bacilli</taxon>
        <taxon>Bacillales</taxon>
        <taxon>Bacillaceae</taxon>
        <taxon>Bacillus</taxon>
        <taxon>Bacillus cereus group</taxon>
    </lineage>
</organism>
<reference key="1">
    <citation type="submission" date="2008-10" db="EMBL/GenBank/DDBJ databases">
        <title>Genome sequence of Bacillus anthracis str. CDC 684.</title>
        <authorList>
            <person name="Dodson R.J."/>
            <person name="Munk A.C."/>
            <person name="Brettin T."/>
            <person name="Bruce D."/>
            <person name="Detter C."/>
            <person name="Tapia R."/>
            <person name="Han C."/>
            <person name="Sutton G."/>
            <person name="Sims D."/>
        </authorList>
    </citation>
    <scope>NUCLEOTIDE SEQUENCE [LARGE SCALE GENOMIC DNA]</scope>
    <source>
        <strain>CDC 684 / NRRL 3495</strain>
    </source>
</reference>